<dbReference type="EMBL" id="AP008955">
    <property type="protein sequence ID" value="BAH41200.1"/>
    <property type="molecule type" value="Genomic_DNA"/>
</dbReference>
<dbReference type="RefSeq" id="WP_007716243.1">
    <property type="nucleotide sequence ID" value="NC_012491.1"/>
</dbReference>
<dbReference type="SMR" id="C0ZII2"/>
<dbReference type="STRING" id="358681.BBR47_02230"/>
<dbReference type="GeneID" id="95752113"/>
<dbReference type="KEGG" id="bbe:BBR47_02230"/>
<dbReference type="eggNOG" id="COG0089">
    <property type="taxonomic scope" value="Bacteria"/>
</dbReference>
<dbReference type="HOGENOM" id="CLU_037562_3_2_9"/>
<dbReference type="Proteomes" id="UP000001877">
    <property type="component" value="Chromosome"/>
</dbReference>
<dbReference type="GO" id="GO:1990904">
    <property type="term" value="C:ribonucleoprotein complex"/>
    <property type="evidence" value="ECO:0007669"/>
    <property type="project" value="UniProtKB-KW"/>
</dbReference>
<dbReference type="GO" id="GO:0005840">
    <property type="term" value="C:ribosome"/>
    <property type="evidence" value="ECO:0007669"/>
    <property type="project" value="UniProtKB-KW"/>
</dbReference>
<dbReference type="GO" id="GO:0019843">
    <property type="term" value="F:rRNA binding"/>
    <property type="evidence" value="ECO:0007669"/>
    <property type="project" value="UniProtKB-UniRule"/>
</dbReference>
<dbReference type="GO" id="GO:0003735">
    <property type="term" value="F:structural constituent of ribosome"/>
    <property type="evidence" value="ECO:0007669"/>
    <property type="project" value="InterPro"/>
</dbReference>
<dbReference type="GO" id="GO:0006412">
    <property type="term" value="P:translation"/>
    <property type="evidence" value="ECO:0007669"/>
    <property type="project" value="UniProtKB-UniRule"/>
</dbReference>
<dbReference type="FunFam" id="3.30.70.330:FF:000001">
    <property type="entry name" value="50S ribosomal protein L23"/>
    <property type="match status" value="1"/>
</dbReference>
<dbReference type="Gene3D" id="3.30.70.330">
    <property type="match status" value="1"/>
</dbReference>
<dbReference type="HAMAP" id="MF_01369_B">
    <property type="entry name" value="Ribosomal_uL23_B"/>
    <property type="match status" value="1"/>
</dbReference>
<dbReference type="InterPro" id="IPR012677">
    <property type="entry name" value="Nucleotide-bd_a/b_plait_sf"/>
</dbReference>
<dbReference type="InterPro" id="IPR013025">
    <property type="entry name" value="Ribosomal_uL23-like"/>
</dbReference>
<dbReference type="InterPro" id="IPR012678">
    <property type="entry name" value="Ribosomal_uL23/eL15/eS24_sf"/>
</dbReference>
<dbReference type="InterPro" id="IPR001014">
    <property type="entry name" value="Ribosomal_uL23_CS"/>
</dbReference>
<dbReference type="NCBIfam" id="NF004363">
    <property type="entry name" value="PRK05738.2-4"/>
    <property type="match status" value="1"/>
</dbReference>
<dbReference type="PANTHER" id="PTHR11620">
    <property type="entry name" value="60S RIBOSOMAL PROTEIN L23A"/>
    <property type="match status" value="1"/>
</dbReference>
<dbReference type="Pfam" id="PF00276">
    <property type="entry name" value="Ribosomal_L23"/>
    <property type="match status" value="1"/>
</dbReference>
<dbReference type="SUPFAM" id="SSF54189">
    <property type="entry name" value="Ribosomal proteins S24e, L23 and L15e"/>
    <property type="match status" value="1"/>
</dbReference>
<dbReference type="PROSITE" id="PS00050">
    <property type="entry name" value="RIBOSOMAL_L23"/>
    <property type="match status" value="1"/>
</dbReference>
<feature type="chain" id="PRO_1000184068" description="Large ribosomal subunit protein uL23">
    <location>
        <begin position="1"/>
        <end position="96"/>
    </location>
</feature>
<gene>
    <name evidence="1" type="primary">rplW</name>
    <name type="ordered locus">BBR47_02230</name>
</gene>
<comment type="function">
    <text evidence="1">One of the early assembly proteins it binds 23S rRNA. One of the proteins that surrounds the polypeptide exit tunnel on the outside of the ribosome. Forms the main docking site for trigger factor binding to the ribosome.</text>
</comment>
<comment type="subunit">
    <text evidence="1">Part of the 50S ribosomal subunit. Contacts protein L29, and trigger factor when it is bound to the ribosome.</text>
</comment>
<comment type="similarity">
    <text evidence="1">Belongs to the universal ribosomal protein uL23 family.</text>
</comment>
<proteinExistence type="inferred from homology"/>
<organism>
    <name type="scientific">Brevibacillus brevis (strain 47 / JCM 6285 / NBRC 100599)</name>
    <dbReference type="NCBI Taxonomy" id="358681"/>
    <lineage>
        <taxon>Bacteria</taxon>
        <taxon>Bacillati</taxon>
        <taxon>Bacillota</taxon>
        <taxon>Bacilli</taxon>
        <taxon>Bacillales</taxon>
        <taxon>Paenibacillaceae</taxon>
        <taxon>Brevibacillus</taxon>
    </lineage>
</organism>
<sequence length="96" mass="11011">MKSLHDVLKRPVITERTTDMMAEKKYVFEVPLKANKTEIKQAVEKVFGVKVEAVNTVRVPAKPKRYGKYSGYTSEWKKAIVKLTDDSKELAFYEGV</sequence>
<reference key="1">
    <citation type="submission" date="2005-03" db="EMBL/GenBank/DDBJ databases">
        <title>Brevibacillus brevis strain 47, complete genome.</title>
        <authorList>
            <person name="Hosoyama A."/>
            <person name="Yamada R."/>
            <person name="Hongo Y."/>
            <person name="Terui Y."/>
            <person name="Ankai A."/>
            <person name="Masuyama W."/>
            <person name="Sekiguchi M."/>
            <person name="Takeda T."/>
            <person name="Asano K."/>
            <person name="Ohji S."/>
            <person name="Ichikawa N."/>
            <person name="Narita S."/>
            <person name="Aoki N."/>
            <person name="Miura H."/>
            <person name="Matsushita S."/>
            <person name="Sekigawa T."/>
            <person name="Yamagata H."/>
            <person name="Yoshikawa H."/>
            <person name="Udaka S."/>
            <person name="Tanikawa S."/>
            <person name="Fujita N."/>
        </authorList>
    </citation>
    <scope>NUCLEOTIDE SEQUENCE [LARGE SCALE GENOMIC DNA]</scope>
    <source>
        <strain>47 / JCM 6285 / NBRC 100599</strain>
    </source>
</reference>
<protein>
    <recommendedName>
        <fullName evidence="1">Large ribosomal subunit protein uL23</fullName>
    </recommendedName>
    <alternativeName>
        <fullName evidence="2">50S ribosomal protein L23</fullName>
    </alternativeName>
</protein>
<accession>C0ZII2</accession>
<keyword id="KW-1185">Reference proteome</keyword>
<keyword id="KW-0687">Ribonucleoprotein</keyword>
<keyword id="KW-0689">Ribosomal protein</keyword>
<keyword id="KW-0694">RNA-binding</keyword>
<keyword id="KW-0699">rRNA-binding</keyword>
<name>RL23_BREBN</name>
<evidence type="ECO:0000255" key="1">
    <source>
        <dbReference type="HAMAP-Rule" id="MF_01369"/>
    </source>
</evidence>
<evidence type="ECO:0000305" key="2"/>